<proteinExistence type="inferred from homology"/>
<gene>
    <name type="primary">VAC8</name>
    <name type="ordered locus">CNBA3360</name>
</gene>
<organism>
    <name type="scientific">Cryptococcus neoformans var. neoformans serotype D (strain B-3501A)</name>
    <name type="common">Filobasidiella neoformans</name>
    <dbReference type="NCBI Taxonomy" id="283643"/>
    <lineage>
        <taxon>Eukaryota</taxon>
        <taxon>Fungi</taxon>
        <taxon>Dikarya</taxon>
        <taxon>Basidiomycota</taxon>
        <taxon>Agaricomycotina</taxon>
        <taxon>Tremellomycetes</taxon>
        <taxon>Tremellales</taxon>
        <taxon>Cryptococcaceae</taxon>
        <taxon>Cryptococcus</taxon>
        <taxon>Cryptococcus neoformans species complex</taxon>
    </lineage>
</organism>
<evidence type="ECO:0000250" key="1"/>
<evidence type="ECO:0000256" key="2">
    <source>
        <dbReference type="SAM" id="MobiDB-lite"/>
    </source>
</evidence>
<evidence type="ECO:0000305" key="3"/>
<protein>
    <recommendedName>
        <fullName>Vacuolar protein 8</fullName>
    </recommendedName>
</protein>
<dbReference type="EMBL" id="AAEY01000001">
    <property type="protein sequence ID" value="EAL23689.1"/>
    <property type="status" value="ALT_INIT"/>
    <property type="molecule type" value="Genomic_DNA"/>
</dbReference>
<dbReference type="RefSeq" id="XP_778336.1">
    <property type="nucleotide sequence ID" value="XM_773243.1"/>
</dbReference>
<dbReference type="SMR" id="P0CM61"/>
<dbReference type="EnsemblFungi" id="AAW40867">
    <property type="protein sequence ID" value="AAW40867"/>
    <property type="gene ID" value="CNA03500"/>
</dbReference>
<dbReference type="GeneID" id="4933594"/>
<dbReference type="KEGG" id="cnb:CNBA3360"/>
<dbReference type="HOGENOM" id="CLU_021483_0_0_1"/>
<dbReference type="OrthoDB" id="3963at5206"/>
<dbReference type="GO" id="GO:0000329">
    <property type="term" value="C:fungal-type vacuole membrane"/>
    <property type="evidence" value="ECO:0007669"/>
    <property type="project" value="EnsemblFungi"/>
</dbReference>
<dbReference type="GO" id="GO:0045121">
    <property type="term" value="C:membrane raft"/>
    <property type="evidence" value="ECO:0007669"/>
    <property type="project" value="EnsemblFungi"/>
</dbReference>
<dbReference type="GO" id="GO:0071563">
    <property type="term" value="C:Myo2p-Vac17p-Vac8p transport complex"/>
    <property type="evidence" value="ECO:0007669"/>
    <property type="project" value="EnsemblFungi"/>
</dbReference>
<dbReference type="GO" id="GO:0031965">
    <property type="term" value="C:nuclear membrane"/>
    <property type="evidence" value="ECO:0007669"/>
    <property type="project" value="EnsemblFungi"/>
</dbReference>
<dbReference type="GO" id="GO:0071561">
    <property type="term" value="C:nucleus-vacuole junction"/>
    <property type="evidence" value="ECO:0007669"/>
    <property type="project" value="EnsemblFungi"/>
</dbReference>
<dbReference type="GO" id="GO:0000407">
    <property type="term" value="C:phagophore assembly site"/>
    <property type="evidence" value="ECO:0007669"/>
    <property type="project" value="EnsemblFungi"/>
</dbReference>
<dbReference type="GO" id="GO:0042802">
    <property type="term" value="F:identical protein binding"/>
    <property type="evidence" value="ECO:0007669"/>
    <property type="project" value="EnsemblFungi"/>
</dbReference>
<dbReference type="GO" id="GO:0043495">
    <property type="term" value="F:protein-membrane adaptor activity"/>
    <property type="evidence" value="ECO:0007669"/>
    <property type="project" value="EnsemblFungi"/>
</dbReference>
<dbReference type="GO" id="GO:0051656">
    <property type="term" value="P:establishment of organelle localization"/>
    <property type="evidence" value="ECO:0007669"/>
    <property type="project" value="EnsemblFungi"/>
</dbReference>
<dbReference type="GO" id="GO:0071562">
    <property type="term" value="P:nucleus-vacuole junction assembly"/>
    <property type="evidence" value="ECO:0007669"/>
    <property type="project" value="EnsemblFungi"/>
</dbReference>
<dbReference type="GO" id="GO:0000425">
    <property type="term" value="P:pexophagy"/>
    <property type="evidence" value="ECO:0007669"/>
    <property type="project" value="EnsemblFungi"/>
</dbReference>
<dbReference type="GO" id="GO:0034727">
    <property type="term" value="P:piecemeal microautophagy of the nucleus"/>
    <property type="evidence" value="ECO:0007669"/>
    <property type="project" value="EnsemblFungi"/>
</dbReference>
<dbReference type="GO" id="GO:1903044">
    <property type="term" value="P:protein localization to membrane raft"/>
    <property type="evidence" value="ECO:0007669"/>
    <property type="project" value="EnsemblFungi"/>
</dbReference>
<dbReference type="GO" id="GO:0034497">
    <property type="term" value="P:protein localization to phagophore assembly site"/>
    <property type="evidence" value="ECO:0007669"/>
    <property type="project" value="EnsemblFungi"/>
</dbReference>
<dbReference type="GO" id="GO:0031503">
    <property type="term" value="P:protein-containing complex localization"/>
    <property type="evidence" value="ECO:0007669"/>
    <property type="project" value="EnsemblFungi"/>
</dbReference>
<dbReference type="GO" id="GO:0034517">
    <property type="term" value="P:ribophagy"/>
    <property type="evidence" value="ECO:0007669"/>
    <property type="project" value="EnsemblFungi"/>
</dbReference>
<dbReference type="GO" id="GO:0042144">
    <property type="term" value="P:vacuole fusion, non-autophagic"/>
    <property type="evidence" value="ECO:0007669"/>
    <property type="project" value="EnsemblFungi"/>
</dbReference>
<dbReference type="GO" id="GO:0000011">
    <property type="term" value="P:vacuole inheritance"/>
    <property type="evidence" value="ECO:0007669"/>
    <property type="project" value="EnsemblFungi"/>
</dbReference>
<dbReference type="FunFam" id="1.25.10.10:FF:000095">
    <property type="entry name" value="Vacuolar protein 8"/>
    <property type="match status" value="1"/>
</dbReference>
<dbReference type="FunFam" id="1.25.10.10:FF:000236">
    <property type="entry name" value="Vacuolar protein 8, variant"/>
    <property type="match status" value="1"/>
</dbReference>
<dbReference type="FunFam" id="1.25.10.10:FF:000340">
    <property type="entry name" value="Vacuolar protein 8, variant"/>
    <property type="match status" value="1"/>
</dbReference>
<dbReference type="Gene3D" id="1.25.10.10">
    <property type="entry name" value="Leucine-rich Repeat Variant"/>
    <property type="match status" value="3"/>
</dbReference>
<dbReference type="InterPro" id="IPR011989">
    <property type="entry name" value="ARM-like"/>
</dbReference>
<dbReference type="InterPro" id="IPR016024">
    <property type="entry name" value="ARM-type_fold"/>
</dbReference>
<dbReference type="InterPro" id="IPR000225">
    <property type="entry name" value="Armadillo"/>
</dbReference>
<dbReference type="InterPro" id="IPR045156">
    <property type="entry name" value="Vac8"/>
</dbReference>
<dbReference type="PANTHER" id="PTHR47249">
    <property type="entry name" value="VACUOLAR PROTEIN 8"/>
    <property type="match status" value="1"/>
</dbReference>
<dbReference type="PANTHER" id="PTHR47249:SF1">
    <property type="entry name" value="VACUOLAR PROTEIN 8"/>
    <property type="match status" value="1"/>
</dbReference>
<dbReference type="Pfam" id="PF00514">
    <property type="entry name" value="Arm"/>
    <property type="match status" value="6"/>
</dbReference>
<dbReference type="SMART" id="SM00185">
    <property type="entry name" value="ARM"/>
    <property type="match status" value="9"/>
</dbReference>
<dbReference type="SUPFAM" id="SSF48371">
    <property type="entry name" value="ARM repeat"/>
    <property type="match status" value="1"/>
</dbReference>
<dbReference type="PROSITE" id="PS50176">
    <property type="entry name" value="ARM_REPEAT"/>
    <property type="match status" value="7"/>
</dbReference>
<sequence length="630" mass="67316">MGSALSSCCSPRRKNAYEPLLLETEREAVADLLQYLENRSTTNFFAGSPLAALTTLSFSENVDLQRSAALAFAEITEKEVREVGRDTLDPVLYLLSSHDPEVQRAASAALGNLAVNAENKLLVVSLGGLEPLIRQMLSPNVEVQCNAVGCITNLATHDENKTQIAKSGALVPLTRLAKSKDMRVQRNATGALLNMTHSDENRQQLVAAGAIPVLVSLLNSPDTDVQYYCTTALSNIAVDAANRKKLAQSEPKLVQSLVQLMDSQSLKVQCQAALALRNLASDSKYQLEIVKFGGLKPLLRLLHSSYLPLILSAAACVRNVSIHPANESPIIESGFLQPLIELLSFDENEEVQCHAISTLRNLAASSEKNKGAIVEAGAVEKIKSLVLTVPLAVQSEMTACVAVLALSDDLKPQLLEMGICEVLIPLTNSPSVEVQGNSAAALGNLSSKAAEDYAPFNAVWNKPDGGLHAYLVRFLSSADITFQHIAVWTIVQLLEAEDEQLTNNIRSSPILISSIRQLAKSPPPSRAGGAPRHDPNDPSAGSSEDEFEDGLTDQEGEGEIVSLARRILDLTEVGEEGDEFGERAGRNVPVGSHGQAPGQGQTSQVGSMGSEHAALRASVHRALSGGGRDR</sequence>
<accession>P0CM61</accession>
<accession>Q560A4</accession>
<accession>Q5KPA7</accession>
<comment type="function">
    <text evidence="1">Functions in both vacuole inheritance and protein targeting from the cytoplasm to vacuole.</text>
</comment>
<comment type="subcellular location">
    <subcellularLocation>
        <location evidence="1">Vacuole membrane</location>
        <topology evidence="1">Lipid-anchor</topology>
    </subcellularLocation>
</comment>
<comment type="similarity">
    <text evidence="3">Belongs to the beta-catenin family.</text>
</comment>
<comment type="sequence caution" evidence="3">
    <conflict type="erroneous initiation">
        <sequence resource="EMBL-CDS" id="EAL23689"/>
    </conflict>
    <text>Extended N-terminus.</text>
</comment>
<reference key="1">
    <citation type="journal article" date="2005" name="Science">
        <title>The genome of the basidiomycetous yeast and human pathogen Cryptococcus neoformans.</title>
        <authorList>
            <person name="Loftus B.J."/>
            <person name="Fung E."/>
            <person name="Roncaglia P."/>
            <person name="Rowley D."/>
            <person name="Amedeo P."/>
            <person name="Bruno D."/>
            <person name="Vamathevan J."/>
            <person name="Miranda M."/>
            <person name="Anderson I.J."/>
            <person name="Fraser J.A."/>
            <person name="Allen J.E."/>
            <person name="Bosdet I.E."/>
            <person name="Brent M.R."/>
            <person name="Chiu R."/>
            <person name="Doering T.L."/>
            <person name="Donlin M.J."/>
            <person name="D'Souza C.A."/>
            <person name="Fox D.S."/>
            <person name="Grinberg V."/>
            <person name="Fu J."/>
            <person name="Fukushima M."/>
            <person name="Haas B.J."/>
            <person name="Huang J.C."/>
            <person name="Janbon G."/>
            <person name="Jones S.J.M."/>
            <person name="Koo H.L."/>
            <person name="Krzywinski M.I."/>
            <person name="Kwon-Chung K.J."/>
            <person name="Lengeler K.B."/>
            <person name="Maiti R."/>
            <person name="Marra M.A."/>
            <person name="Marra R.E."/>
            <person name="Mathewson C.A."/>
            <person name="Mitchell T.G."/>
            <person name="Pertea M."/>
            <person name="Riggs F.R."/>
            <person name="Salzberg S.L."/>
            <person name="Schein J.E."/>
            <person name="Shvartsbeyn A."/>
            <person name="Shin H."/>
            <person name="Shumway M."/>
            <person name="Specht C.A."/>
            <person name="Suh B.B."/>
            <person name="Tenney A."/>
            <person name="Utterback T.R."/>
            <person name="Wickes B.L."/>
            <person name="Wortman J.R."/>
            <person name="Wye N.H."/>
            <person name="Kronstad J.W."/>
            <person name="Lodge J.K."/>
            <person name="Heitman J."/>
            <person name="Davis R.W."/>
            <person name="Fraser C.M."/>
            <person name="Hyman R.W."/>
        </authorList>
    </citation>
    <scope>NUCLEOTIDE SEQUENCE [LARGE SCALE GENOMIC DNA]</scope>
    <source>
        <strain>B-3501A</strain>
    </source>
</reference>
<keyword id="KW-0449">Lipoprotein</keyword>
<keyword id="KW-0472">Membrane</keyword>
<keyword id="KW-0519">Myristate</keyword>
<keyword id="KW-0677">Repeat</keyword>
<keyword id="KW-0926">Vacuole</keyword>
<feature type="initiator methionine" description="Removed" evidence="1">
    <location>
        <position position="1"/>
    </location>
</feature>
<feature type="chain" id="PRO_0000410033" description="Vacuolar protein 8">
    <location>
        <begin position="2"/>
        <end position="630"/>
    </location>
</feature>
<feature type="repeat" description="ARM 1">
    <location>
        <begin position="74"/>
        <end position="115"/>
    </location>
</feature>
<feature type="repeat" description="ARM 2">
    <location>
        <begin position="117"/>
        <end position="156"/>
    </location>
</feature>
<feature type="repeat" description="ARM 3">
    <location>
        <begin position="158"/>
        <end position="197"/>
    </location>
</feature>
<feature type="repeat" description="ARM 4">
    <location>
        <begin position="199"/>
        <end position="238"/>
    </location>
</feature>
<feature type="repeat" description="ARM 5">
    <location>
        <begin position="242"/>
        <end position="281"/>
    </location>
</feature>
<feature type="repeat" description="ARM 6">
    <location>
        <begin position="283"/>
        <end position="322"/>
    </location>
</feature>
<feature type="repeat" description="ARM 7">
    <location>
        <begin position="324"/>
        <end position="364"/>
    </location>
</feature>
<feature type="repeat" description="ARM 8">
    <location>
        <begin position="408"/>
        <end position="447"/>
    </location>
</feature>
<feature type="repeat" description="ARM 9">
    <location>
        <begin position="456"/>
        <end position="495"/>
    </location>
</feature>
<feature type="region of interest" description="Disordered" evidence="2">
    <location>
        <begin position="519"/>
        <end position="558"/>
    </location>
</feature>
<feature type="region of interest" description="Disordered" evidence="2">
    <location>
        <begin position="572"/>
        <end position="630"/>
    </location>
</feature>
<feature type="compositionally biased region" description="Acidic residues" evidence="2">
    <location>
        <begin position="543"/>
        <end position="558"/>
    </location>
</feature>
<feature type="compositionally biased region" description="Polar residues" evidence="2">
    <location>
        <begin position="598"/>
        <end position="607"/>
    </location>
</feature>
<feature type="lipid moiety-binding region" description="N-myristoyl glycine" evidence="1">
    <location>
        <position position="2"/>
    </location>
</feature>
<name>VAC8_CRYNB</name>